<evidence type="ECO:0000255" key="1">
    <source>
        <dbReference type="HAMAP-Rule" id="MF_00452"/>
    </source>
</evidence>
<evidence type="ECO:0000256" key="2">
    <source>
        <dbReference type="SAM" id="MobiDB-lite"/>
    </source>
</evidence>
<reference key="1">
    <citation type="submission" date="2006-01" db="EMBL/GenBank/DDBJ databases">
        <title>Complete sequence of Anaeromyxobacter dehalogenans 2CP-C.</title>
        <authorList>
            <person name="Copeland A."/>
            <person name="Lucas S."/>
            <person name="Lapidus A."/>
            <person name="Barry K."/>
            <person name="Detter J.C."/>
            <person name="Glavina T."/>
            <person name="Hammon N."/>
            <person name="Israni S."/>
            <person name="Pitluck S."/>
            <person name="Brettin T."/>
            <person name="Bruce D."/>
            <person name="Han C."/>
            <person name="Tapia R."/>
            <person name="Gilna P."/>
            <person name="Kiss H."/>
            <person name="Schmutz J."/>
            <person name="Larimer F."/>
            <person name="Land M."/>
            <person name="Kyrpides N."/>
            <person name="Anderson I."/>
            <person name="Sanford R.A."/>
            <person name="Ritalahti K.M."/>
            <person name="Thomas H.S."/>
            <person name="Kirby J.R."/>
            <person name="Zhulin I.B."/>
            <person name="Loeffler F.E."/>
            <person name="Richardson P."/>
        </authorList>
    </citation>
    <scope>NUCLEOTIDE SEQUENCE [LARGE SCALE GENOMIC DNA]</scope>
    <source>
        <strain>2CP-C</strain>
    </source>
</reference>
<protein>
    <recommendedName>
        <fullName evidence="1">Phosphoenolpyruvate carboxykinase [GTP]</fullName>
        <shortName evidence="1">PEP carboxykinase</shortName>
        <shortName evidence="1">PEPCK</shortName>
        <ecNumber evidence="1">4.1.1.32</ecNumber>
    </recommendedName>
</protein>
<accession>Q2IFT1</accession>
<dbReference type="EC" id="4.1.1.32" evidence="1"/>
<dbReference type="EMBL" id="CP000251">
    <property type="protein sequence ID" value="ABC83442.1"/>
    <property type="molecule type" value="Genomic_DNA"/>
</dbReference>
<dbReference type="RefSeq" id="WP_011422724.1">
    <property type="nucleotide sequence ID" value="NC_007760.1"/>
</dbReference>
<dbReference type="SMR" id="Q2IFT1"/>
<dbReference type="STRING" id="290397.Adeh_3676"/>
<dbReference type="KEGG" id="ade:Adeh_3676"/>
<dbReference type="eggNOG" id="COG1274">
    <property type="taxonomic scope" value="Bacteria"/>
</dbReference>
<dbReference type="HOGENOM" id="CLU_028872_1_1_7"/>
<dbReference type="OrthoDB" id="9758871at2"/>
<dbReference type="UniPathway" id="UPA00138"/>
<dbReference type="Proteomes" id="UP000001935">
    <property type="component" value="Chromosome"/>
</dbReference>
<dbReference type="GO" id="GO:0005829">
    <property type="term" value="C:cytosol"/>
    <property type="evidence" value="ECO:0007669"/>
    <property type="project" value="TreeGrafter"/>
</dbReference>
<dbReference type="GO" id="GO:0005525">
    <property type="term" value="F:GTP binding"/>
    <property type="evidence" value="ECO:0007669"/>
    <property type="project" value="UniProtKB-UniRule"/>
</dbReference>
<dbReference type="GO" id="GO:0030145">
    <property type="term" value="F:manganese ion binding"/>
    <property type="evidence" value="ECO:0007669"/>
    <property type="project" value="UniProtKB-UniRule"/>
</dbReference>
<dbReference type="GO" id="GO:0004613">
    <property type="term" value="F:phosphoenolpyruvate carboxykinase (GTP) activity"/>
    <property type="evidence" value="ECO:0007669"/>
    <property type="project" value="UniProtKB-UniRule"/>
</dbReference>
<dbReference type="GO" id="GO:0071333">
    <property type="term" value="P:cellular response to glucose stimulus"/>
    <property type="evidence" value="ECO:0007669"/>
    <property type="project" value="TreeGrafter"/>
</dbReference>
<dbReference type="GO" id="GO:0006094">
    <property type="term" value="P:gluconeogenesis"/>
    <property type="evidence" value="ECO:0007669"/>
    <property type="project" value="UniProtKB-UniRule"/>
</dbReference>
<dbReference type="GO" id="GO:0046327">
    <property type="term" value="P:glycerol biosynthetic process from pyruvate"/>
    <property type="evidence" value="ECO:0007669"/>
    <property type="project" value="TreeGrafter"/>
</dbReference>
<dbReference type="GO" id="GO:0006107">
    <property type="term" value="P:oxaloacetate metabolic process"/>
    <property type="evidence" value="ECO:0007669"/>
    <property type="project" value="TreeGrafter"/>
</dbReference>
<dbReference type="GO" id="GO:0019543">
    <property type="term" value="P:propionate catabolic process"/>
    <property type="evidence" value="ECO:0007669"/>
    <property type="project" value="TreeGrafter"/>
</dbReference>
<dbReference type="GO" id="GO:0033993">
    <property type="term" value="P:response to lipid"/>
    <property type="evidence" value="ECO:0007669"/>
    <property type="project" value="TreeGrafter"/>
</dbReference>
<dbReference type="GO" id="GO:0042594">
    <property type="term" value="P:response to starvation"/>
    <property type="evidence" value="ECO:0007669"/>
    <property type="project" value="TreeGrafter"/>
</dbReference>
<dbReference type="CDD" id="cd00819">
    <property type="entry name" value="PEPCK_GTP"/>
    <property type="match status" value="1"/>
</dbReference>
<dbReference type="FunFam" id="3.40.449.10:FF:000005">
    <property type="entry name" value="Phosphoenolpyruvate carboxykinase [GTP]"/>
    <property type="match status" value="1"/>
</dbReference>
<dbReference type="Gene3D" id="3.90.228.20">
    <property type="match status" value="1"/>
</dbReference>
<dbReference type="Gene3D" id="3.40.449.10">
    <property type="entry name" value="Phosphoenolpyruvate Carboxykinase, domain 1"/>
    <property type="match status" value="1"/>
</dbReference>
<dbReference type="Gene3D" id="2.170.8.10">
    <property type="entry name" value="Phosphoenolpyruvate Carboxykinase, domain 2"/>
    <property type="match status" value="1"/>
</dbReference>
<dbReference type="HAMAP" id="MF_00452">
    <property type="entry name" value="PEPCK_GTP"/>
    <property type="match status" value="1"/>
</dbReference>
<dbReference type="InterPro" id="IPR018091">
    <property type="entry name" value="PEP_carboxykin_GTP_CS"/>
</dbReference>
<dbReference type="InterPro" id="IPR013035">
    <property type="entry name" value="PEP_carboxykinase_C"/>
</dbReference>
<dbReference type="InterPro" id="IPR008209">
    <property type="entry name" value="PEP_carboxykinase_GTP"/>
</dbReference>
<dbReference type="InterPro" id="IPR035077">
    <property type="entry name" value="PEP_carboxykinase_GTP_C"/>
</dbReference>
<dbReference type="InterPro" id="IPR035078">
    <property type="entry name" value="PEP_carboxykinase_GTP_N"/>
</dbReference>
<dbReference type="InterPro" id="IPR008210">
    <property type="entry name" value="PEP_carboxykinase_N"/>
</dbReference>
<dbReference type="NCBIfam" id="NF003253">
    <property type="entry name" value="PRK04210.1"/>
    <property type="match status" value="1"/>
</dbReference>
<dbReference type="PANTHER" id="PTHR11561">
    <property type="entry name" value="PHOSPHOENOLPYRUVATE CARBOXYKINASE"/>
    <property type="match status" value="1"/>
</dbReference>
<dbReference type="PANTHER" id="PTHR11561:SF0">
    <property type="entry name" value="PHOSPHOENOLPYRUVATE CARBOXYKINASE [GTP]-RELATED"/>
    <property type="match status" value="1"/>
</dbReference>
<dbReference type="Pfam" id="PF00821">
    <property type="entry name" value="PEPCK_GTP"/>
    <property type="match status" value="1"/>
</dbReference>
<dbReference type="Pfam" id="PF17297">
    <property type="entry name" value="PEPCK_N"/>
    <property type="match status" value="1"/>
</dbReference>
<dbReference type="PIRSF" id="PIRSF001348">
    <property type="entry name" value="PEP_carboxykinase_GTP"/>
    <property type="match status" value="1"/>
</dbReference>
<dbReference type="SUPFAM" id="SSF68923">
    <property type="entry name" value="PEP carboxykinase N-terminal domain"/>
    <property type="match status" value="1"/>
</dbReference>
<dbReference type="SUPFAM" id="SSF53795">
    <property type="entry name" value="PEP carboxykinase-like"/>
    <property type="match status" value="1"/>
</dbReference>
<dbReference type="PROSITE" id="PS00505">
    <property type="entry name" value="PEPCK_GTP"/>
    <property type="match status" value="1"/>
</dbReference>
<comment type="function">
    <text evidence="1">Catalyzes the conversion of oxaloacetate (OAA) to phosphoenolpyruvate (PEP), the rate-limiting step in the metabolic pathway that produces glucose from lactate and other precursors derived from the citric acid cycle.</text>
</comment>
<comment type="catalytic activity">
    <reaction evidence="1">
        <text>oxaloacetate + GTP = phosphoenolpyruvate + GDP + CO2</text>
        <dbReference type="Rhea" id="RHEA:10388"/>
        <dbReference type="ChEBI" id="CHEBI:16452"/>
        <dbReference type="ChEBI" id="CHEBI:16526"/>
        <dbReference type="ChEBI" id="CHEBI:37565"/>
        <dbReference type="ChEBI" id="CHEBI:58189"/>
        <dbReference type="ChEBI" id="CHEBI:58702"/>
        <dbReference type="EC" id="4.1.1.32"/>
    </reaction>
</comment>
<comment type="cofactor">
    <cofactor evidence="1">
        <name>Mn(2+)</name>
        <dbReference type="ChEBI" id="CHEBI:29035"/>
    </cofactor>
    <text evidence="1">Binds 1 Mn(2+) ion per subunit.</text>
</comment>
<comment type="pathway">
    <text evidence="1">Carbohydrate biosynthesis; gluconeogenesis.</text>
</comment>
<comment type="subunit">
    <text evidence="1">Monomer.</text>
</comment>
<comment type="subcellular location">
    <subcellularLocation>
        <location evidence="1">Cytoplasm</location>
    </subcellularLocation>
</comment>
<comment type="similarity">
    <text evidence="1">Belongs to the phosphoenolpyruvate carboxykinase [GTP] family.</text>
</comment>
<keyword id="KW-0963">Cytoplasm</keyword>
<keyword id="KW-0210">Decarboxylase</keyword>
<keyword id="KW-0312">Gluconeogenesis</keyword>
<keyword id="KW-0342">GTP-binding</keyword>
<keyword id="KW-0456">Lyase</keyword>
<keyword id="KW-0464">Manganese</keyword>
<keyword id="KW-0479">Metal-binding</keyword>
<keyword id="KW-0547">Nucleotide-binding</keyword>
<keyword id="KW-1185">Reference proteome</keyword>
<organism>
    <name type="scientific">Anaeromyxobacter dehalogenans (strain 2CP-C)</name>
    <dbReference type="NCBI Taxonomy" id="290397"/>
    <lineage>
        <taxon>Bacteria</taxon>
        <taxon>Pseudomonadati</taxon>
        <taxon>Myxococcota</taxon>
        <taxon>Myxococcia</taxon>
        <taxon>Myxococcales</taxon>
        <taxon>Cystobacterineae</taxon>
        <taxon>Anaeromyxobacteraceae</taxon>
        <taxon>Anaeromyxobacter</taxon>
    </lineage>
</organism>
<proteinExistence type="inferred from homology"/>
<gene>
    <name evidence="1" type="primary">pckG</name>
    <name type="ordered locus">Adeh_3676</name>
</gene>
<sequence>MSTSPAARPTSNPHLLGWVDEMAKLCKPDRVHWCDGSEAEKKRLTDDAVAAKVLIPLDQQKWPGCHYHHSNPSDVARVEHLTFICTPTKEQAGPTNNWMEPKEAYRKLGAIFDGSMKGRTMYVVPYVMGPSTSPFAKVGIEITDSVYVALNMGIMARMGKVALDRLGDSNEFNRGLHSVADCNPERRFICHFPQDNTIWSVGSGYGGNALLGKKCLALRIASYLAKNEGWLAEHMLILEAESPTGEKQYVAAAFPSACGKTNFAMMIPPAAFPGWKIRTVGDDISWMRVGEDGRLWAVNPENGYFGVAPGTNRKTNPNAMDSVRKDTIFTNVARTPDGDIWWEGMDHEAPAELIDWKGQPWKKGSTEKAAHPNSRFTAPAKNNPAISPLVDDPKGVPISAIIFGGRRSTTVPLVLEAFNWTHGVYLGSTMGSETTAAATGQVGVVRRDPMAMLPFIGYDCGSYLQHWLDMQSRIPNPPKIFLVNWFRKSAEGKFLWPGYGDNMRVLKWMLDRAAGRAPAKETLLGYTPGDAGLDLHGLDVSKDAIAAATRIDLGEWEQELESQAEWFEKLGKTLPAPLALQRELLLERVRAARKVK</sequence>
<feature type="chain" id="PRO_1000060286" description="Phosphoenolpyruvate carboxykinase [GTP]">
    <location>
        <begin position="1"/>
        <end position="596"/>
    </location>
</feature>
<feature type="region of interest" description="Disordered" evidence="2">
    <location>
        <begin position="362"/>
        <end position="388"/>
    </location>
</feature>
<feature type="active site" evidence="1">
    <location>
        <position position="258"/>
    </location>
</feature>
<feature type="binding site" evidence="1">
    <location>
        <position position="77"/>
    </location>
    <ligand>
        <name>substrate</name>
    </ligand>
</feature>
<feature type="binding site" evidence="1">
    <location>
        <begin position="205"/>
        <end position="207"/>
    </location>
    <ligand>
        <name>substrate</name>
    </ligand>
</feature>
<feature type="binding site" evidence="1">
    <location>
        <position position="214"/>
    </location>
    <ligand>
        <name>Mn(2+)</name>
        <dbReference type="ChEBI" id="CHEBI:29035"/>
    </ligand>
</feature>
<feature type="binding site" evidence="1">
    <location>
        <position position="234"/>
    </location>
    <ligand>
        <name>Mn(2+)</name>
        <dbReference type="ChEBI" id="CHEBI:29035"/>
    </ligand>
</feature>
<feature type="binding site" evidence="1">
    <location>
        <position position="256"/>
    </location>
    <ligand>
        <name>substrate</name>
    </ligand>
</feature>
<feature type="binding site" evidence="1">
    <location>
        <begin position="257"/>
        <end position="262"/>
    </location>
    <ligand>
        <name>GTP</name>
        <dbReference type="ChEBI" id="CHEBI:37565"/>
    </ligand>
</feature>
<feature type="binding site" evidence="1">
    <location>
        <position position="283"/>
    </location>
    <ligand>
        <name>Mn(2+)</name>
        <dbReference type="ChEBI" id="CHEBI:29035"/>
    </ligand>
</feature>
<feature type="binding site" evidence="1">
    <location>
        <begin position="373"/>
        <end position="375"/>
    </location>
    <ligand>
        <name>substrate</name>
    </ligand>
</feature>
<feature type="binding site" evidence="1">
    <location>
        <position position="375"/>
    </location>
    <ligand>
        <name>GTP</name>
        <dbReference type="ChEBI" id="CHEBI:37565"/>
    </ligand>
</feature>
<feature type="binding site" evidence="1">
    <location>
        <position position="406"/>
    </location>
    <ligand>
        <name>GTP</name>
        <dbReference type="ChEBI" id="CHEBI:37565"/>
    </ligand>
</feature>
<feature type="binding site" evidence="1">
    <location>
        <begin position="499"/>
        <end position="502"/>
    </location>
    <ligand>
        <name>GTP</name>
        <dbReference type="ChEBI" id="CHEBI:37565"/>
    </ligand>
</feature>
<name>PCKG_ANADE</name>